<name>Y1945_MYCTU</name>
<sequence>MRSDTREEISAALDAYHASLSRVLDLKCDALTTPELLACLQRLEVERRRQGAAEHALINQLAGQACEEELGGTLRTALANRLHITPGEASRRIAEAEDLGERRALTGEPLPAQLTATAAAQREGKIGREHIKEIQAFFKELSAAVDLGIREAAEAQLAELATSRRPDHLHGLATQLMDWLHPDGNFSDQERARKRGITMGKQEFDGMSRISGLLTPELRATIEAVLAKLAAPGACNPDDQTPVVDDTPDADAVRRDTRSQAQRHHDGLLAGLRGLLASGELGQHRGLPVTVVVSTTLKELEAATGKGVTGGGSRVPMSDLIRMASNAHHYLALFDGAKPLALYHTKRLASPAQRIMLYAKDRGCSRPGCDAPAYHSEVHHVTPWTTTHRTDINDLTLACGPDNRLVEKGWKTRKNAKGDTEWLPPAHLDHGQPRINRYHHPEKILCEPDDDEPH</sequence>
<evidence type="ECO:0000256" key="1">
    <source>
        <dbReference type="SAM" id="MobiDB-lite"/>
    </source>
</evidence>
<evidence type="ECO:0000305" key="2"/>
<gene>
    <name type="ordered locus">Rv1945</name>
    <name type="ORF">MTCY09F9.19c</name>
</gene>
<dbReference type="EMBL" id="AL123456">
    <property type="protein sequence ID" value="CCP44712.1"/>
    <property type="molecule type" value="Genomic_DNA"/>
</dbReference>
<dbReference type="PIR" id="E70637">
    <property type="entry name" value="E70637"/>
</dbReference>
<dbReference type="RefSeq" id="NP_216461.1">
    <property type="nucleotide sequence ID" value="NC_000962.3"/>
</dbReference>
<dbReference type="RefSeq" id="WP_003903691.1">
    <property type="nucleotide sequence ID" value="NZ_KK339370.1"/>
</dbReference>
<dbReference type="STRING" id="83332.Rv1945"/>
<dbReference type="PaxDb" id="83332-Rv1945"/>
<dbReference type="DNASU" id="885980"/>
<dbReference type="GeneID" id="885980"/>
<dbReference type="KEGG" id="mtu:Rv1945"/>
<dbReference type="KEGG" id="mtv:RVBD_1945"/>
<dbReference type="TubercuList" id="Rv1945"/>
<dbReference type="eggNOG" id="COG1403">
    <property type="taxonomic scope" value="Bacteria"/>
</dbReference>
<dbReference type="InParanoid" id="P9WLQ5"/>
<dbReference type="OrthoDB" id="4419061at2"/>
<dbReference type="PhylomeDB" id="P9WLQ5"/>
<dbReference type="Proteomes" id="UP000001584">
    <property type="component" value="Chromosome"/>
</dbReference>
<dbReference type="GO" id="GO:0004519">
    <property type="term" value="F:endonuclease activity"/>
    <property type="evidence" value="ECO:0007669"/>
    <property type="project" value="InterPro"/>
</dbReference>
<dbReference type="GO" id="GO:0003676">
    <property type="term" value="F:nucleic acid binding"/>
    <property type="evidence" value="ECO:0007669"/>
    <property type="project" value="InterPro"/>
</dbReference>
<dbReference type="GO" id="GO:0008270">
    <property type="term" value="F:zinc ion binding"/>
    <property type="evidence" value="ECO:0007669"/>
    <property type="project" value="InterPro"/>
</dbReference>
<dbReference type="CDD" id="cd00085">
    <property type="entry name" value="HNHc"/>
    <property type="match status" value="1"/>
</dbReference>
<dbReference type="InterPro" id="IPR003870">
    <property type="entry name" value="DUF222"/>
</dbReference>
<dbReference type="InterPro" id="IPR002711">
    <property type="entry name" value="HNH"/>
</dbReference>
<dbReference type="InterPro" id="IPR003615">
    <property type="entry name" value="HNH_nuc"/>
</dbReference>
<dbReference type="Pfam" id="PF02720">
    <property type="entry name" value="DUF222"/>
    <property type="match status" value="1"/>
</dbReference>
<dbReference type="Pfam" id="PF01844">
    <property type="entry name" value="HNH"/>
    <property type="match status" value="1"/>
</dbReference>
<dbReference type="SMART" id="SM00507">
    <property type="entry name" value="HNHc"/>
    <property type="match status" value="1"/>
</dbReference>
<reference key="1">
    <citation type="journal article" date="1998" name="Nature">
        <title>Deciphering the biology of Mycobacterium tuberculosis from the complete genome sequence.</title>
        <authorList>
            <person name="Cole S.T."/>
            <person name="Brosch R."/>
            <person name="Parkhill J."/>
            <person name="Garnier T."/>
            <person name="Churcher C.M."/>
            <person name="Harris D.E."/>
            <person name="Gordon S.V."/>
            <person name="Eiglmeier K."/>
            <person name="Gas S."/>
            <person name="Barry C.E. III"/>
            <person name="Tekaia F."/>
            <person name="Badcock K."/>
            <person name="Basham D."/>
            <person name="Brown D."/>
            <person name="Chillingworth T."/>
            <person name="Connor R."/>
            <person name="Davies R.M."/>
            <person name="Devlin K."/>
            <person name="Feltwell T."/>
            <person name="Gentles S."/>
            <person name="Hamlin N."/>
            <person name="Holroyd S."/>
            <person name="Hornsby T."/>
            <person name="Jagels K."/>
            <person name="Krogh A."/>
            <person name="McLean J."/>
            <person name="Moule S."/>
            <person name="Murphy L.D."/>
            <person name="Oliver S."/>
            <person name="Osborne J."/>
            <person name="Quail M.A."/>
            <person name="Rajandream M.A."/>
            <person name="Rogers J."/>
            <person name="Rutter S."/>
            <person name="Seeger K."/>
            <person name="Skelton S."/>
            <person name="Squares S."/>
            <person name="Squares R."/>
            <person name="Sulston J.E."/>
            <person name="Taylor K."/>
            <person name="Whitehead S."/>
            <person name="Barrell B.G."/>
        </authorList>
    </citation>
    <scope>NUCLEOTIDE SEQUENCE [LARGE SCALE GENOMIC DNA]</scope>
    <source>
        <strain>ATCC 25618 / H37Rv</strain>
    </source>
</reference>
<reference key="2">
    <citation type="journal article" date="2011" name="Mol. Cell. Proteomics">
        <title>Proteogenomic analysis of Mycobacterium tuberculosis by high resolution mass spectrometry.</title>
        <authorList>
            <person name="Kelkar D.S."/>
            <person name="Kumar D."/>
            <person name="Kumar P."/>
            <person name="Balakrishnan L."/>
            <person name="Muthusamy B."/>
            <person name="Yadav A.K."/>
            <person name="Shrivastava P."/>
            <person name="Marimuthu A."/>
            <person name="Anand S."/>
            <person name="Sundaram H."/>
            <person name="Kingsbury R."/>
            <person name="Harsha H.C."/>
            <person name="Nair B."/>
            <person name="Prasad T.S."/>
            <person name="Chauhan D.S."/>
            <person name="Katoch K."/>
            <person name="Katoch V.M."/>
            <person name="Kumar P."/>
            <person name="Chaerkady R."/>
            <person name="Ramachandran S."/>
            <person name="Dash D."/>
            <person name="Pandey A."/>
        </authorList>
    </citation>
    <scope>IDENTIFICATION BY MASS SPECTROMETRY [LARGE SCALE ANALYSIS]</scope>
    <source>
        <strain>ATCC 25618 / H37Rv</strain>
    </source>
</reference>
<organism>
    <name type="scientific">Mycobacterium tuberculosis (strain ATCC 25618 / H37Rv)</name>
    <dbReference type="NCBI Taxonomy" id="83332"/>
    <lineage>
        <taxon>Bacteria</taxon>
        <taxon>Bacillati</taxon>
        <taxon>Actinomycetota</taxon>
        <taxon>Actinomycetes</taxon>
        <taxon>Mycobacteriales</taxon>
        <taxon>Mycobacteriaceae</taxon>
        <taxon>Mycobacterium</taxon>
        <taxon>Mycobacterium tuberculosis complex</taxon>
    </lineage>
</organism>
<proteinExistence type="evidence at protein level"/>
<accession>P9WLQ5</accession>
<accession>L0T860</accession>
<accession>P95269</accession>
<comment type="similarity">
    <text evidence="2">Belongs to the Rv1128c/1148c/1588c/1702c/1945/3466 family.</text>
</comment>
<feature type="chain" id="PRO_0000103914" description="Uncharacterized protein Rv1945">
    <location>
        <begin position="1"/>
        <end position="454"/>
    </location>
</feature>
<feature type="domain" description="HNH">
    <location>
        <begin position="364"/>
        <end position="405"/>
    </location>
</feature>
<feature type="region of interest" description="Disordered" evidence="1">
    <location>
        <begin position="415"/>
        <end position="434"/>
    </location>
</feature>
<keyword id="KW-1185">Reference proteome</keyword>
<protein>
    <recommendedName>
        <fullName>Uncharacterized protein Rv1945</fullName>
    </recommendedName>
</protein>